<feature type="chain" id="PRO_0000047302" description="Zinc finger protein 58">
    <location>
        <begin position="1"/>
        <end position="489"/>
    </location>
</feature>
<feature type="domain" description="KRAB" evidence="2">
    <location>
        <begin position="2"/>
        <end position="73"/>
    </location>
</feature>
<feature type="zinc finger region" description="C2H2-type 1; degenerate" evidence="1">
    <location>
        <begin position="78"/>
        <end position="100"/>
    </location>
</feature>
<feature type="zinc finger region" description="C2H2-type 2" evidence="1">
    <location>
        <begin position="106"/>
        <end position="128"/>
    </location>
</feature>
<feature type="zinc finger region" description="C2H2-type 3" evidence="1">
    <location>
        <begin position="134"/>
        <end position="156"/>
    </location>
</feature>
<feature type="zinc finger region" description="C2H2-type 4" evidence="1">
    <location>
        <begin position="162"/>
        <end position="184"/>
    </location>
</feature>
<feature type="zinc finger region" description="C2H2-type 5" evidence="1">
    <location>
        <begin position="190"/>
        <end position="212"/>
    </location>
</feature>
<feature type="zinc finger region" description="C2H2-type 6" evidence="1">
    <location>
        <begin position="218"/>
        <end position="240"/>
    </location>
</feature>
<feature type="zinc finger region" description="C2H2-type 7" evidence="1">
    <location>
        <begin position="246"/>
        <end position="268"/>
    </location>
</feature>
<feature type="zinc finger region" description="C2H2-type 8" evidence="1">
    <location>
        <begin position="274"/>
        <end position="296"/>
    </location>
</feature>
<feature type="zinc finger region" description="C2H2-type 9" evidence="1">
    <location>
        <begin position="302"/>
        <end position="324"/>
    </location>
</feature>
<feature type="zinc finger region" description="C2H2-type 10" evidence="1">
    <location>
        <begin position="330"/>
        <end position="352"/>
    </location>
</feature>
<feature type="zinc finger region" description="C2H2-type 11" evidence="1">
    <location>
        <begin position="358"/>
        <end position="380"/>
    </location>
</feature>
<feature type="zinc finger region" description="C2H2-type 12" evidence="1">
    <location>
        <begin position="386"/>
        <end position="408"/>
    </location>
</feature>
<feature type="zinc finger region" description="C2H2-type 13" evidence="1">
    <location>
        <begin position="410"/>
        <end position="432"/>
    </location>
</feature>
<feature type="zinc finger region" description="C2H2-type 14" evidence="1">
    <location>
        <begin position="438"/>
        <end position="460"/>
    </location>
</feature>
<feature type="zinc finger region" description="C2H2-type 15" evidence="1">
    <location>
        <begin position="466"/>
        <end position="488"/>
    </location>
</feature>
<feature type="sequence conflict" description="In Ref. 5; AAA39531." evidence="4" ref="5">
    <original>Y</original>
    <variation>YKCEECGKAFSTSSNLSEHKRIHTGEKPI</variation>
    <location>
        <position position="190"/>
    </location>
</feature>
<sequence>MLSFWDVAIDFSPEERECLEPDQWDLYRDVMLENYSHLDFLGLALSKPFLVTFLEQRQGPWDVKRQAAAAVHPGKTVNKCKDFSKAFFCKSLLTQHQRIRTGEKAFKCEECGKAFNNRSNLSEHKRIHTGEKPYKCEECGKAFRIRSKLSTHQRVHTGEKPYKCEECGKAFNSHSNLSEHKRIHTGEKPYKCEECGKAFSTRSTYYRHQKNHTGKKPYKCEECAKEFSYPSLLKVHQRIHSAEKSYKCEECGKPFYCPLLLKKHQIIHSAEKPYKCAECGKAFHYPSLLKRHQRIHAGKKPCKCKDCDRAFYSSAFLKRHQRIHSEENSYKCGECGKRFCSFPHLQYHQRFHSGEKPYKCEQCGKTFSTLSYLPWHKLRHSGEKSYKCEKCGKMFYSTLDLKKHQKIHEYKCGECHYGFPNYAALTAHQRVHTGEKPHVCEQCGKDFSRIDSLNQHQLVHTGEKPYKCEKCGKCFYRSSSLKRHQGIHS</sequence>
<protein>
    <recommendedName>
        <fullName>Zinc finger protein 58</fullName>
        <shortName>Zfp-58</shortName>
    </recommendedName>
    <alternativeName>
        <fullName>Regulator of sex-limitation candidate 5</fullName>
    </alternativeName>
    <alternativeName>
        <fullName>Zinc finger protein Mfg-1</fullName>
    </alternativeName>
</protein>
<proteinExistence type="evidence at transcript level"/>
<keyword id="KW-0238">DNA-binding</keyword>
<keyword id="KW-0479">Metal-binding</keyword>
<keyword id="KW-0539">Nucleus</keyword>
<keyword id="KW-1185">Reference proteome</keyword>
<keyword id="KW-0677">Repeat</keyword>
<keyword id="KW-0804">Transcription</keyword>
<keyword id="KW-0805">Transcription regulation</keyword>
<keyword id="KW-0862">Zinc</keyword>
<keyword id="KW-0863">Zinc-finger</keyword>
<reference key="1">
    <citation type="journal article" date="2003" name="Genes Dev.">
        <title>Regulator of sex-limitation (Rsl) encodes a pair of KRAB zinc-finger genes that control sexually dimorphic liver gene expression.</title>
        <authorList>
            <person name="Krebs C.J."/>
            <person name="Larkins L.K."/>
            <person name="Price R."/>
            <person name="Tullis K.M."/>
            <person name="Miller R.D."/>
            <person name="Robins D.M."/>
        </authorList>
    </citation>
    <scope>NUCLEOTIDE SEQUENCE [MRNA]</scope>
    <source>
        <strain>C57BL/6J</strain>
    </source>
</reference>
<reference key="2">
    <citation type="journal article" date="2005" name="Science">
        <title>The transcriptional landscape of the mammalian genome.</title>
        <authorList>
            <person name="Carninci P."/>
            <person name="Kasukawa T."/>
            <person name="Katayama S."/>
            <person name="Gough J."/>
            <person name="Frith M.C."/>
            <person name="Maeda N."/>
            <person name="Oyama R."/>
            <person name="Ravasi T."/>
            <person name="Lenhard B."/>
            <person name="Wells C."/>
            <person name="Kodzius R."/>
            <person name="Shimokawa K."/>
            <person name="Bajic V.B."/>
            <person name="Brenner S.E."/>
            <person name="Batalov S."/>
            <person name="Forrest A.R."/>
            <person name="Zavolan M."/>
            <person name="Davis M.J."/>
            <person name="Wilming L.G."/>
            <person name="Aidinis V."/>
            <person name="Allen J.E."/>
            <person name="Ambesi-Impiombato A."/>
            <person name="Apweiler R."/>
            <person name="Aturaliya R.N."/>
            <person name="Bailey T.L."/>
            <person name="Bansal M."/>
            <person name="Baxter L."/>
            <person name="Beisel K.W."/>
            <person name="Bersano T."/>
            <person name="Bono H."/>
            <person name="Chalk A.M."/>
            <person name="Chiu K.P."/>
            <person name="Choudhary V."/>
            <person name="Christoffels A."/>
            <person name="Clutterbuck D.R."/>
            <person name="Crowe M.L."/>
            <person name="Dalla E."/>
            <person name="Dalrymple B.P."/>
            <person name="de Bono B."/>
            <person name="Della Gatta G."/>
            <person name="di Bernardo D."/>
            <person name="Down T."/>
            <person name="Engstrom P."/>
            <person name="Fagiolini M."/>
            <person name="Faulkner G."/>
            <person name="Fletcher C.F."/>
            <person name="Fukushima T."/>
            <person name="Furuno M."/>
            <person name="Futaki S."/>
            <person name="Gariboldi M."/>
            <person name="Georgii-Hemming P."/>
            <person name="Gingeras T.R."/>
            <person name="Gojobori T."/>
            <person name="Green R.E."/>
            <person name="Gustincich S."/>
            <person name="Harbers M."/>
            <person name="Hayashi Y."/>
            <person name="Hensch T.K."/>
            <person name="Hirokawa N."/>
            <person name="Hill D."/>
            <person name="Huminiecki L."/>
            <person name="Iacono M."/>
            <person name="Ikeo K."/>
            <person name="Iwama A."/>
            <person name="Ishikawa T."/>
            <person name="Jakt M."/>
            <person name="Kanapin A."/>
            <person name="Katoh M."/>
            <person name="Kawasawa Y."/>
            <person name="Kelso J."/>
            <person name="Kitamura H."/>
            <person name="Kitano H."/>
            <person name="Kollias G."/>
            <person name="Krishnan S.P."/>
            <person name="Kruger A."/>
            <person name="Kummerfeld S.K."/>
            <person name="Kurochkin I.V."/>
            <person name="Lareau L.F."/>
            <person name="Lazarevic D."/>
            <person name="Lipovich L."/>
            <person name="Liu J."/>
            <person name="Liuni S."/>
            <person name="McWilliam S."/>
            <person name="Madan Babu M."/>
            <person name="Madera M."/>
            <person name="Marchionni L."/>
            <person name="Matsuda H."/>
            <person name="Matsuzawa S."/>
            <person name="Miki H."/>
            <person name="Mignone F."/>
            <person name="Miyake S."/>
            <person name="Morris K."/>
            <person name="Mottagui-Tabar S."/>
            <person name="Mulder N."/>
            <person name="Nakano N."/>
            <person name="Nakauchi H."/>
            <person name="Ng P."/>
            <person name="Nilsson R."/>
            <person name="Nishiguchi S."/>
            <person name="Nishikawa S."/>
            <person name="Nori F."/>
            <person name="Ohara O."/>
            <person name="Okazaki Y."/>
            <person name="Orlando V."/>
            <person name="Pang K.C."/>
            <person name="Pavan W.J."/>
            <person name="Pavesi G."/>
            <person name="Pesole G."/>
            <person name="Petrovsky N."/>
            <person name="Piazza S."/>
            <person name="Reed J."/>
            <person name="Reid J.F."/>
            <person name="Ring B.Z."/>
            <person name="Ringwald M."/>
            <person name="Rost B."/>
            <person name="Ruan Y."/>
            <person name="Salzberg S.L."/>
            <person name="Sandelin A."/>
            <person name="Schneider C."/>
            <person name="Schoenbach C."/>
            <person name="Sekiguchi K."/>
            <person name="Semple C.A."/>
            <person name="Seno S."/>
            <person name="Sessa L."/>
            <person name="Sheng Y."/>
            <person name="Shibata Y."/>
            <person name="Shimada H."/>
            <person name="Shimada K."/>
            <person name="Silva D."/>
            <person name="Sinclair B."/>
            <person name="Sperling S."/>
            <person name="Stupka E."/>
            <person name="Sugiura K."/>
            <person name="Sultana R."/>
            <person name="Takenaka Y."/>
            <person name="Taki K."/>
            <person name="Tammoja K."/>
            <person name="Tan S.L."/>
            <person name="Tang S."/>
            <person name="Taylor M.S."/>
            <person name="Tegner J."/>
            <person name="Teichmann S.A."/>
            <person name="Ueda H.R."/>
            <person name="van Nimwegen E."/>
            <person name="Verardo R."/>
            <person name="Wei C.L."/>
            <person name="Yagi K."/>
            <person name="Yamanishi H."/>
            <person name="Zabarovsky E."/>
            <person name="Zhu S."/>
            <person name="Zimmer A."/>
            <person name="Hide W."/>
            <person name="Bult C."/>
            <person name="Grimmond S.M."/>
            <person name="Teasdale R.D."/>
            <person name="Liu E.T."/>
            <person name="Brusic V."/>
            <person name="Quackenbush J."/>
            <person name="Wahlestedt C."/>
            <person name="Mattick J.S."/>
            <person name="Hume D.A."/>
            <person name="Kai C."/>
            <person name="Sasaki D."/>
            <person name="Tomaru Y."/>
            <person name="Fukuda S."/>
            <person name="Kanamori-Katayama M."/>
            <person name="Suzuki M."/>
            <person name="Aoki J."/>
            <person name="Arakawa T."/>
            <person name="Iida J."/>
            <person name="Imamura K."/>
            <person name="Itoh M."/>
            <person name="Kato T."/>
            <person name="Kawaji H."/>
            <person name="Kawagashira N."/>
            <person name="Kawashima T."/>
            <person name="Kojima M."/>
            <person name="Kondo S."/>
            <person name="Konno H."/>
            <person name="Nakano K."/>
            <person name="Ninomiya N."/>
            <person name="Nishio T."/>
            <person name="Okada M."/>
            <person name="Plessy C."/>
            <person name="Shibata K."/>
            <person name="Shiraki T."/>
            <person name="Suzuki S."/>
            <person name="Tagami M."/>
            <person name="Waki K."/>
            <person name="Watahiki A."/>
            <person name="Okamura-Oho Y."/>
            <person name="Suzuki H."/>
            <person name="Kawai J."/>
            <person name="Hayashizaki Y."/>
        </authorList>
    </citation>
    <scope>NUCLEOTIDE SEQUENCE [LARGE SCALE MRNA]</scope>
    <source>
        <strain>C57BL/6J</strain>
        <tissue>Aorta</tissue>
        <tissue>Egg</tissue>
        <tissue>Placenta</tissue>
        <tissue>Vein</tissue>
    </source>
</reference>
<reference key="3">
    <citation type="submission" date="2005-07" db="EMBL/GenBank/DDBJ databases">
        <authorList>
            <person name="Mural R.J."/>
            <person name="Adams M.D."/>
            <person name="Myers E.W."/>
            <person name="Smith H.O."/>
            <person name="Venter J.C."/>
        </authorList>
    </citation>
    <scope>NUCLEOTIDE SEQUENCE [LARGE SCALE GENOMIC DNA]</scope>
</reference>
<reference key="4">
    <citation type="journal article" date="2004" name="Genome Res.">
        <title>The status, quality, and expansion of the NIH full-length cDNA project: the Mammalian Gene Collection (MGC).</title>
        <authorList>
            <consortium name="The MGC Project Team"/>
        </authorList>
    </citation>
    <scope>NUCLEOTIDE SEQUENCE [LARGE SCALE MRNA]</scope>
</reference>
<reference key="5">
    <citation type="journal article" date="1989" name="Proc. Natl. Acad. Sci. U.S.A.">
        <title>Mouse genes coding for 'zinc-finger'-containing proteins: characterization and expression in differentiated cells.</title>
        <authorList>
            <person name="Passananti C."/>
            <person name="Felsani A."/>
            <person name="Caruso M."/>
            <person name="Amati P."/>
        </authorList>
    </citation>
    <scope>NUCLEOTIDE SEQUENCE [MRNA] OF 99-239</scope>
    <scope>FUNCTION</scope>
    <scope>TISSUE SPECIFICITY</scope>
    <scope>DEVELOPMENTAL STAGE</scope>
</reference>
<accession>P16372</accession>
<accession>Q3TS54</accession>
<accession>Q6P8L3</accession>
<accession>Q7M6X1</accession>
<accession>Q8BRV1</accession>
<evidence type="ECO:0000255" key="1">
    <source>
        <dbReference type="PROSITE-ProRule" id="PRU00042"/>
    </source>
</evidence>
<evidence type="ECO:0000255" key="2">
    <source>
        <dbReference type="PROSITE-ProRule" id="PRU00119"/>
    </source>
</evidence>
<evidence type="ECO:0000269" key="3">
    <source>
    </source>
</evidence>
<evidence type="ECO:0000305" key="4"/>
<name>ZFP58_MOUSE</name>
<organism>
    <name type="scientific">Mus musculus</name>
    <name type="common">Mouse</name>
    <dbReference type="NCBI Taxonomy" id="10090"/>
    <lineage>
        <taxon>Eukaryota</taxon>
        <taxon>Metazoa</taxon>
        <taxon>Chordata</taxon>
        <taxon>Craniata</taxon>
        <taxon>Vertebrata</taxon>
        <taxon>Euteleostomi</taxon>
        <taxon>Mammalia</taxon>
        <taxon>Eutheria</taxon>
        <taxon>Euarchontoglires</taxon>
        <taxon>Glires</taxon>
        <taxon>Rodentia</taxon>
        <taxon>Myomorpha</taxon>
        <taxon>Muroidea</taxon>
        <taxon>Muridae</taxon>
        <taxon>Murinae</taxon>
        <taxon>Mus</taxon>
        <taxon>Mus</taxon>
    </lineage>
</organism>
<dbReference type="EMBL" id="BK001635">
    <property type="protein sequence ID" value="DAA01860.1"/>
    <property type="molecule type" value="mRNA"/>
</dbReference>
<dbReference type="EMBL" id="AK041250">
    <property type="protein sequence ID" value="BAC30880.1"/>
    <property type="molecule type" value="mRNA"/>
</dbReference>
<dbReference type="EMBL" id="AK162259">
    <property type="protein sequence ID" value="BAE36821.1"/>
    <property type="molecule type" value="mRNA"/>
</dbReference>
<dbReference type="EMBL" id="AK167399">
    <property type="protein sequence ID" value="BAE39488.1"/>
    <property type="molecule type" value="mRNA"/>
</dbReference>
<dbReference type="EMBL" id="CH466661">
    <property type="protein sequence ID" value="EDL10303.1"/>
    <property type="molecule type" value="Genomic_DNA"/>
</dbReference>
<dbReference type="EMBL" id="CH466661">
    <property type="protein sequence ID" value="EDL10304.1"/>
    <property type="molecule type" value="Genomic_DNA"/>
</dbReference>
<dbReference type="EMBL" id="BC061200">
    <property type="protein sequence ID" value="AAH61200.1"/>
    <property type="status" value="ALT_SEQ"/>
    <property type="molecule type" value="mRNA"/>
</dbReference>
<dbReference type="EMBL" id="BC139150">
    <property type="protein sequence ID" value="AAI39151.1"/>
    <property type="molecule type" value="mRNA"/>
</dbReference>
<dbReference type="EMBL" id="BC139151">
    <property type="protein sequence ID" value="AAI39152.1"/>
    <property type="molecule type" value="mRNA"/>
</dbReference>
<dbReference type="EMBL" id="M28513">
    <property type="protein sequence ID" value="AAA39531.1"/>
    <property type="molecule type" value="mRNA"/>
</dbReference>
<dbReference type="CCDS" id="CCDS26616.1"/>
<dbReference type="PIR" id="A39240">
    <property type="entry name" value="A39240"/>
</dbReference>
<dbReference type="RefSeq" id="NP_001007576.1">
    <property type="nucleotide sequence ID" value="NM_001007575.2"/>
</dbReference>
<dbReference type="SMR" id="P16372"/>
<dbReference type="BioGRID" id="232010">
    <property type="interactions" value="32"/>
</dbReference>
<dbReference type="FunCoup" id="P16372">
    <property type="interactions" value="1"/>
</dbReference>
<dbReference type="STRING" id="10090.ENSMUSP00000075487"/>
<dbReference type="iPTMnet" id="P16372"/>
<dbReference type="PhosphoSitePlus" id="P16372"/>
<dbReference type="PaxDb" id="10090-ENSMUSP00000075487"/>
<dbReference type="ProteomicsDB" id="299548"/>
<dbReference type="DNASU" id="238693"/>
<dbReference type="Ensembl" id="ENSMUST00000076123.12">
    <property type="protein sequence ID" value="ENSMUSP00000075487.6"/>
    <property type="gene ID" value="ENSMUSG00000071291.11"/>
</dbReference>
<dbReference type="Ensembl" id="ENSMUST00000171518.8">
    <property type="protein sequence ID" value="ENSMUSP00000132285.2"/>
    <property type="gene ID" value="ENSMUSG00000071291.11"/>
</dbReference>
<dbReference type="GeneID" id="238693"/>
<dbReference type="KEGG" id="mmu:238693"/>
<dbReference type="UCSC" id="uc007rax.2">
    <property type="organism name" value="mouse"/>
</dbReference>
<dbReference type="AGR" id="MGI:99205"/>
<dbReference type="CTD" id="238693"/>
<dbReference type="MGI" id="MGI:99205">
    <property type="gene designation" value="Zfp58"/>
</dbReference>
<dbReference type="VEuPathDB" id="HostDB:ENSMUSG00000071291"/>
<dbReference type="eggNOG" id="KOG1721">
    <property type="taxonomic scope" value="Eukaryota"/>
</dbReference>
<dbReference type="GeneTree" id="ENSGT00940000153165"/>
<dbReference type="HOGENOM" id="CLU_476683_0_0_1"/>
<dbReference type="InParanoid" id="P16372"/>
<dbReference type="OMA" id="AYNCEEC"/>
<dbReference type="OrthoDB" id="6077919at2759"/>
<dbReference type="PhylomeDB" id="P16372"/>
<dbReference type="TreeFam" id="TF338849"/>
<dbReference type="Reactome" id="R-MMU-212436">
    <property type="pathway name" value="Generic Transcription Pathway"/>
</dbReference>
<dbReference type="BioGRID-ORCS" id="238693">
    <property type="hits" value="1 hit in 78 CRISPR screens"/>
</dbReference>
<dbReference type="ChiTaRS" id="Zfp58">
    <property type="organism name" value="mouse"/>
</dbReference>
<dbReference type="PRO" id="PR:P16372"/>
<dbReference type="Proteomes" id="UP000000589">
    <property type="component" value="Chromosome 13"/>
</dbReference>
<dbReference type="RNAct" id="P16372">
    <property type="molecule type" value="protein"/>
</dbReference>
<dbReference type="Bgee" id="ENSMUSG00000071291">
    <property type="expression patterns" value="Expressed in animal zygote and 65 other cell types or tissues"/>
</dbReference>
<dbReference type="ExpressionAtlas" id="P16372">
    <property type="expression patterns" value="baseline and differential"/>
</dbReference>
<dbReference type="GO" id="GO:0005634">
    <property type="term" value="C:nucleus"/>
    <property type="evidence" value="ECO:0007669"/>
    <property type="project" value="UniProtKB-SubCell"/>
</dbReference>
<dbReference type="GO" id="GO:0003677">
    <property type="term" value="F:DNA binding"/>
    <property type="evidence" value="ECO:0007669"/>
    <property type="project" value="UniProtKB-KW"/>
</dbReference>
<dbReference type="GO" id="GO:0008270">
    <property type="term" value="F:zinc ion binding"/>
    <property type="evidence" value="ECO:0007669"/>
    <property type="project" value="UniProtKB-KW"/>
</dbReference>
<dbReference type="GO" id="GO:0006355">
    <property type="term" value="P:regulation of DNA-templated transcription"/>
    <property type="evidence" value="ECO:0007669"/>
    <property type="project" value="InterPro"/>
</dbReference>
<dbReference type="CDD" id="cd07765">
    <property type="entry name" value="KRAB_A-box"/>
    <property type="match status" value="1"/>
</dbReference>
<dbReference type="FunFam" id="3.30.160.60:FF:001956">
    <property type="entry name" value="ZFP37 zinc finger protein"/>
    <property type="match status" value="1"/>
</dbReference>
<dbReference type="FunFam" id="3.30.160.60:FF:000380">
    <property type="entry name" value="zinc finger protein 2 isoform X2"/>
    <property type="match status" value="1"/>
</dbReference>
<dbReference type="FunFam" id="3.30.160.60:FF:002005">
    <property type="entry name" value="Zinc finger protein 200"/>
    <property type="match status" value="1"/>
</dbReference>
<dbReference type="FunFam" id="3.30.160.60:FF:002343">
    <property type="entry name" value="Zinc finger protein 33A"/>
    <property type="match status" value="3"/>
</dbReference>
<dbReference type="FunFam" id="3.30.160.60:FF:000690">
    <property type="entry name" value="Zinc finger protein 354C"/>
    <property type="match status" value="2"/>
</dbReference>
<dbReference type="FunFam" id="3.30.160.60:FF:002254">
    <property type="entry name" value="Zinc finger protein 540"/>
    <property type="match status" value="1"/>
</dbReference>
<dbReference type="FunFam" id="3.30.160.60:FF:001437">
    <property type="entry name" value="Zinc finger protein 594"/>
    <property type="match status" value="1"/>
</dbReference>
<dbReference type="FunFam" id="3.30.160.60:FF:001630">
    <property type="entry name" value="Zinc finger protein 888"/>
    <property type="match status" value="1"/>
</dbReference>
<dbReference type="FunFam" id="3.30.160.60:FF:001671">
    <property type="entry name" value="Zinc finger protein 94"/>
    <property type="match status" value="1"/>
</dbReference>
<dbReference type="Gene3D" id="6.10.140.140">
    <property type="match status" value="1"/>
</dbReference>
<dbReference type="Gene3D" id="3.30.160.60">
    <property type="entry name" value="Classic Zinc Finger"/>
    <property type="match status" value="15"/>
</dbReference>
<dbReference type="InterPro" id="IPR001909">
    <property type="entry name" value="KRAB"/>
</dbReference>
<dbReference type="InterPro" id="IPR036051">
    <property type="entry name" value="KRAB_dom_sf"/>
</dbReference>
<dbReference type="InterPro" id="IPR036236">
    <property type="entry name" value="Znf_C2H2_sf"/>
</dbReference>
<dbReference type="InterPro" id="IPR013087">
    <property type="entry name" value="Znf_C2H2_type"/>
</dbReference>
<dbReference type="PANTHER" id="PTHR24376">
    <property type="entry name" value="ZINC FINGER PROTEIN"/>
    <property type="match status" value="1"/>
</dbReference>
<dbReference type="PANTHER" id="PTHR24376:SF253">
    <property type="entry name" value="ZINC FINGER PROTEIN 748"/>
    <property type="match status" value="1"/>
</dbReference>
<dbReference type="Pfam" id="PF01352">
    <property type="entry name" value="KRAB"/>
    <property type="match status" value="1"/>
</dbReference>
<dbReference type="Pfam" id="PF00096">
    <property type="entry name" value="zf-C2H2"/>
    <property type="match status" value="12"/>
</dbReference>
<dbReference type="Pfam" id="PF13465">
    <property type="entry name" value="zf-H2C2_2"/>
    <property type="match status" value="1"/>
</dbReference>
<dbReference type="SMART" id="SM00349">
    <property type="entry name" value="KRAB"/>
    <property type="match status" value="1"/>
</dbReference>
<dbReference type="SMART" id="SM00355">
    <property type="entry name" value="ZnF_C2H2"/>
    <property type="match status" value="14"/>
</dbReference>
<dbReference type="SUPFAM" id="SSF57667">
    <property type="entry name" value="beta-beta-alpha zinc fingers"/>
    <property type="match status" value="8"/>
</dbReference>
<dbReference type="SUPFAM" id="SSF109640">
    <property type="entry name" value="KRAB domain (Kruppel-associated box)"/>
    <property type="match status" value="1"/>
</dbReference>
<dbReference type="PROSITE" id="PS50805">
    <property type="entry name" value="KRAB"/>
    <property type="match status" value="1"/>
</dbReference>
<dbReference type="PROSITE" id="PS00028">
    <property type="entry name" value="ZINC_FINGER_C2H2_1"/>
    <property type="match status" value="14"/>
</dbReference>
<dbReference type="PROSITE" id="PS50157">
    <property type="entry name" value="ZINC_FINGER_C2H2_2"/>
    <property type="match status" value="15"/>
</dbReference>
<comment type="function">
    <text evidence="3">May have a role during differentiation processes.</text>
</comment>
<comment type="subcellular location">
    <subcellularLocation>
        <location evidence="4">Nucleus</location>
    </subcellularLocation>
</comment>
<comment type="tissue specificity">
    <text evidence="3">Expressed in liver, testis and, at considerably lower levels, in brain, spleen and heart.</text>
</comment>
<comment type="developmental stage">
    <text evidence="3">Expression increases upon differentiation and is not related to the cell cycle.</text>
</comment>
<comment type="similarity">
    <text evidence="4">Belongs to the krueppel C2H2-type zinc-finger protein family.</text>
</comment>
<comment type="sequence caution" evidence="4">
    <conflict type="miscellaneous discrepancy">
        <sequence resource="EMBL-CDS" id="AAH61200"/>
    </conflict>
    <text>Contaminating sequence. Potential poly-A sequence.</text>
</comment>
<gene>
    <name type="primary">Zfp58</name>
    <name type="synonym">Mfg-1</name>
    <name type="synonym">Rslcan5</name>
    <name type="synonym">Zfp817</name>
</gene>